<evidence type="ECO:0000255" key="1">
    <source>
        <dbReference type="HAMAP-Rule" id="MF_00365"/>
    </source>
</evidence>
<proteinExistence type="inferred from homology"/>
<feature type="chain" id="PRO_0000236104" description="DNA replication and repair protein RecF">
    <location>
        <begin position="1"/>
        <end position="376"/>
    </location>
</feature>
<feature type="binding site" evidence="1">
    <location>
        <begin position="30"/>
        <end position="37"/>
    </location>
    <ligand>
        <name>ATP</name>
        <dbReference type="ChEBI" id="CHEBI:30616"/>
    </ligand>
</feature>
<comment type="function">
    <text evidence="1">The RecF protein is involved in DNA metabolism; it is required for DNA replication and normal SOS inducibility. RecF binds preferentially to single-stranded, linear DNA. It also seems to bind ATP.</text>
</comment>
<comment type="subcellular location">
    <subcellularLocation>
        <location evidence="1">Cytoplasm</location>
    </subcellularLocation>
</comment>
<comment type="similarity">
    <text evidence="1">Belongs to the RecF family.</text>
</comment>
<keyword id="KW-0067">ATP-binding</keyword>
<keyword id="KW-0963">Cytoplasm</keyword>
<keyword id="KW-0227">DNA damage</keyword>
<keyword id="KW-0234">DNA repair</keyword>
<keyword id="KW-0235">DNA replication</keyword>
<keyword id="KW-0238">DNA-binding</keyword>
<keyword id="KW-0547">Nucleotide-binding</keyword>
<keyword id="KW-0742">SOS response</keyword>
<protein>
    <recommendedName>
        <fullName evidence="1">DNA replication and repair protein RecF</fullName>
    </recommendedName>
</protein>
<dbReference type="EMBL" id="CP000117">
    <property type="protein sequence ID" value="ABA22998.1"/>
    <property type="molecule type" value="Genomic_DNA"/>
</dbReference>
<dbReference type="SMR" id="Q3M7N8"/>
<dbReference type="STRING" id="240292.Ava_3391"/>
<dbReference type="KEGG" id="ava:Ava_3391"/>
<dbReference type="eggNOG" id="COG1195">
    <property type="taxonomic scope" value="Bacteria"/>
</dbReference>
<dbReference type="HOGENOM" id="CLU_040267_0_1_3"/>
<dbReference type="Proteomes" id="UP000002533">
    <property type="component" value="Chromosome"/>
</dbReference>
<dbReference type="GO" id="GO:0005737">
    <property type="term" value="C:cytoplasm"/>
    <property type="evidence" value="ECO:0007669"/>
    <property type="project" value="UniProtKB-SubCell"/>
</dbReference>
<dbReference type="GO" id="GO:0005524">
    <property type="term" value="F:ATP binding"/>
    <property type="evidence" value="ECO:0007669"/>
    <property type="project" value="UniProtKB-UniRule"/>
</dbReference>
<dbReference type="GO" id="GO:0003697">
    <property type="term" value="F:single-stranded DNA binding"/>
    <property type="evidence" value="ECO:0007669"/>
    <property type="project" value="UniProtKB-UniRule"/>
</dbReference>
<dbReference type="GO" id="GO:0006260">
    <property type="term" value="P:DNA replication"/>
    <property type="evidence" value="ECO:0007669"/>
    <property type="project" value="UniProtKB-UniRule"/>
</dbReference>
<dbReference type="GO" id="GO:0000731">
    <property type="term" value="P:DNA synthesis involved in DNA repair"/>
    <property type="evidence" value="ECO:0007669"/>
    <property type="project" value="TreeGrafter"/>
</dbReference>
<dbReference type="GO" id="GO:0006302">
    <property type="term" value="P:double-strand break repair"/>
    <property type="evidence" value="ECO:0007669"/>
    <property type="project" value="TreeGrafter"/>
</dbReference>
<dbReference type="GO" id="GO:0009432">
    <property type="term" value="P:SOS response"/>
    <property type="evidence" value="ECO:0007669"/>
    <property type="project" value="UniProtKB-UniRule"/>
</dbReference>
<dbReference type="CDD" id="cd03242">
    <property type="entry name" value="ABC_RecF"/>
    <property type="match status" value="1"/>
</dbReference>
<dbReference type="Gene3D" id="3.40.50.300">
    <property type="entry name" value="P-loop containing nucleotide triphosphate hydrolases"/>
    <property type="match status" value="1"/>
</dbReference>
<dbReference type="Gene3D" id="1.20.1050.90">
    <property type="entry name" value="RecF/RecN/SMC, N-terminal domain"/>
    <property type="match status" value="1"/>
</dbReference>
<dbReference type="HAMAP" id="MF_00365">
    <property type="entry name" value="RecF"/>
    <property type="match status" value="1"/>
</dbReference>
<dbReference type="InterPro" id="IPR001238">
    <property type="entry name" value="DNA-binding_RecF"/>
</dbReference>
<dbReference type="InterPro" id="IPR018078">
    <property type="entry name" value="DNA-binding_RecF_CS"/>
</dbReference>
<dbReference type="InterPro" id="IPR027417">
    <property type="entry name" value="P-loop_NTPase"/>
</dbReference>
<dbReference type="InterPro" id="IPR003395">
    <property type="entry name" value="RecF/RecN/SMC_N"/>
</dbReference>
<dbReference type="InterPro" id="IPR042174">
    <property type="entry name" value="RecF_2"/>
</dbReference>
<dbReference type="NCBIfam" id="TIGR00611">
    <property type="entry name" value="recf"/>
    <property type="match status" value="1"/>
</dbReference>
<dbReference type="PANTHER" id="PTHR32182">
    <property type="entry name" value="DNA REPLICATION AND REPAIR PROTEIN RECF"/>
    <property type="match status" value="1"/>
</dbReference>
<dbReference type="PANTHER" id="PTHR32182:SF0">
    <property type="entry name" value="DNA REPLICATION AND REPAIR PROTEIN RECF"/>
    <property type="match status" value="1"/>
</dbReference>
<dbReference type="Pfam" id="PF02463">
    <property type="entry name" value="SMC_N"/>
    <property type="match status" value="1"/>
</dbReference>
<dbReference type="SUPFAM" id="SSF52540">
    <property type="entry name" value="P-loop containing nucleoside triphosphate hydrolases"/>
    <property type="match status" value="1"/>
</dbReference>
<dbReference type="PROSITE" id="PS00617">
    <property type="entry name" value="RECF_1"/>
    <property type="match status" value="1"/>
</dbReference>
<dbReference type="PROSITE" id="PS00618">
    <property type="entry name" value="RECF_2"/>
    <property type="match status" value="1"/>
</dbReference>
<sequence length="376" mass="42810">MYLKTLHLRHFRNYYDQKVEFTAAKTILVGNNAQGKSNLLEAVELLATLRSHRMARDRDLVQEEEPLAQINATLERDTGVSDLSLILRRNGRRTVALNGESLRRQMDFLGVLNAVQFSSLDLELVRGSPEVRRNWLDTLLIQLEPVYAHILQQYNQVLRQRNAYLKKLQDSALTTQDSALAIWDAQLVTTGTKVIRRRDRALARLAPLATAWHTSISGSTEVLQISYTPNVQLMQNQPEQVQQAFLSQLQQRAVPEMYRGTTLVGPHRDEVELTINQTPARQYGSQGQQRTLVLALKLAELQLIEEVVKEPPLLLLDDVLAELDPSRQNQLLDTIQDRFQTLITTTHLSSFDAQWLNSSQILFVEQGKISTSNSIR</sequence>
<accession>Q3M7N8</accession>
<name>RECF_TRIV2</name>
<gene>
    <name evidence="1" type="primary">recF</name>
    <name type="ordered locus">Ava_3391</name>
</gene>
<reference key="1">
    <citation type="journal article" date="2014" name="Stand. Genomic Sci.">
        <title>Complete genome sequence of Anabaena variabilis ATCC 29413.</title>
        <authorList>
            <person name="Thiel T."/>
            <person name="Pratte B.S."/>
            <person name="Zhong J."/>
            <person name="Goodwin L."/>
            <person name="Copeland A."/>
            <person name="Lucas S."/>
            <person name="Han C."/>
            <person name="Pitluck S."/>
            <person name="Land M.L."/>
            <person name="Kyrpides N.C."/>
            <person name="Woyke T."/>
        </authorList>
    </citation>
    <scope>NUCLEOTIDE SEQUENCE [LARGE SCALE GENOMIC DNA]</scope>
    <source>
        <strain>ATCC 29413 / PCC 7937</strain>
    </source>
</reference>
<organism>
    <name type="scientific">Trichormus variabilis (strain ATCC 29413 / PCC 7937)</name>
    <name type="common">Anabaena variabilis</name>
    <dbReference type="NCBI Taxonomy" id="240292"/>
    <lineage>
        <taxon>Bacteria</taxon>
        <taxon>Bacillati</taxon>
        <taxon>Cyanobacteriota</taxon>
        <taxon>Cyanophyceae</taxon>
        <taxon>Nostocales</taxon>
        <taxon>Nostocaceae</taxon>
        <taxon>Trichormus</taxon>
    </lineage>
</organism>